<accession>A8AMQ1</accession>
<comment type="function">
    <text evidence="1">Involved in peptide bond synthesis. Alleviates ribosome stalling that occurs when 3 or more consecutive Pro residues or the sequence PPG is present in a protein, possibly by augmenting the peptidyl transferase activity of the ribosome. Modification of Lys-34 is required for alleviation.</text>
</comment>
<comment type="pathway">
    <text evidence="1">Protein biosynthesis; polypeptide chain elongation.</text>
</comment>
<comment type="subcellular location">
    <subcellularLocation>
        <location evidence="1">Cytoplasm</location>
    </subcellularLocation>
</comment>
<comment type="PTM">
    <text evidence="1">May be beta-lysylated on the epsilon-amino group of Lys-34 by the combined action of EpmA and EpmB, and then hydroxylated on the C5 position of the same residue by EpmC (if this protein is present). Lysylation is critical for the stimulatory effect of EF-P on peptide-bond formation. The lysylation moiety may extend toward the peptidyltransferase center and stabilize the terminal 3-CCA end of the tRNA. Hydroxylation of the C5 position on Lys-34 may allow additional potential stabilizing hydrogen-bond interactions with the P-tRNA.</text>
</comment>
<comment type="similarity">
    <text evidence="1">Belongs to the elongation factor P family.</text>
</comment>
<name>EFP_CITK8</name>
<keyword id="KW-0963">Cytoplasm</keyword>
<keyword id="KW-0251">Elongation factor</keyword>
<keyword id="KW-0379">Hydroxylation</keyword>
<keyword id="KW-0648">Protein biosynthesis</keyword>
<keyword id="KW-1185">Reference proteome</keyword>
<feature type="chain" id="PRO_1000010715" description="Elongation factor P">
    <location>
        <begin position="1"/>
        <end position="188"/>
    </location>
</feature>
<feature type="modified residue" description="N6-(3,6-diaminohexanoyl)-5-hydroxylysine" evidence="1">
    <location>
        <position position="34"/>
    </location>
</feature>
<evidence type="ECO:0000255" key="1">
    <source>
        <dbReference type="HAMAP-Rule" id="MF_00141"/>
    </source>
</evidence>
<protein>
    <recommendedName>
        <fullName evidence="1">Elongation factor P</fullName>
        <shortName evidence="1">EF-P</shortName>
    </recommendedName>
</protein>
<organism>
    <name type="scientific">Citrobacter koseri (strain ATCC BAA-895 / CDC 4225-83 / SGSC4696)</name>
    <dbReference type="NCBI Taxonomy" id="290338"/>
    <lineage>
        <taxon>Bacteria</taxon>
        <taxon>Pseudomonadati</taxon>
        <taxon>Pseudomonadota</taxon>
        <taxon>Gammaproteobacteria</taxon>
        <taxon>Enterobacterales</taxon>
        <taxon>Enterobacteriaceae</taxon>
        <taxon>Citrobacter</taxon>
    </lineage>
</organism>
<gene>
    <name evidence="1" type="primary">efp</name>
    <name type="ordered locus">CKO_03687</name>
</gene>
<proteinExistence type="inferred from homology"/>
<sequence length="188" mass="20578">MATYYSNDFRAGLKIMLDGEPYAVEASEFVKPGKGQAFARVKLRRLLTGTRVEKTFKSTDSAEGADVVDMNLTYLYNDGEFWHFMNNETFEQLSADAKAIGDSAKWLLDQAECIVTLWNGQPITVTPPNFVELEIVDTDPGLKGDTAGTGGKPATLSTGAVVKVPLFVQIGEVIKVDTRSGEYVSRVK</sequence>
<reference key="1">
    <citation type="submission" date="2007-08" db="EMBL/GenBank/DDBJ databases">
        <authorList>
            <consortium name="The Citrobacter koseri Genome Sequencing Project"/>
            <person name="McClelland M."/>
            <person name="Sanderson E.K."/>
            <person name="Porwollik S."/>
            <person name="Spieth J."/>
            <person name="Clifton W.S."/>
            <person name="Latreille P."/>
            <person name="Courtney L."/>
            <person name="Wang C."/>
            <person name="Pepin K."/>
            <person name="Bhonagiri V."/>
            <person name="Nash W."/>
            <person name="Johnson M."/>
            <person name="Thiruvilangam P."/>
            <person name="Wilson R."/>
        </authorList>
    </citation>
    <scope>NUCLEOTIDE SEQUENCE [LARGE SCALE GENOMIC DNA]</scope>
    <source>
        <strain>ATCC BAA-895 / CDC 4225-83 / SGSC4696</strain>
    </source>
</reference>
<dbReference type="EMBL" id="CP000822">
    <property type="protein sequence ID" value="ABV14764.1"/>
    <property type="molecule type" value="Genomic_DNA"/>
</dbReference>
<dbReference type="RefSeq" id="WP_012134461.1">
    <property type="nucleotide sequence ID" value="NC_009792.1"/>
</dbReference>
<dbReference type="SMR" id="A8AMQ1"/>
<dbReference type="STRING" id="290338.CKO_03687"/>
<dbReference type="GeneID" id="45137391"/>
<dbReference type="KEGG" id="cko:CKO_03687"/>
<dbReference type="HOGENOM" id="CLU_074944_0_0_6"/>
<dbReference type="OrthoDB" id="9801844at2"/>
<dbReference type="UniPathway" id="UPA00345"/>
<dbReference type="Proteomes" id="UP000008148">
    <property type="component" value="Chromosome"/>
</dbReference>
<dbReference type="GO" id="GO:0005829">
    <property type="term" value="C:cytosol"/>
    <property type="evidence" value="ECO:0007669"/>
    <property type="project" value="UniProtKB-ARBA"/>
</dbReference>
<dbReference type="GO" id="GO:0003746">
    <property type="term" value="F:translation elongation factor activity"/>
    <property type="evidence" value="ECO:0007669"/>
    <property type="project" value="UniProtKB-UniRule"/>
</dbReference>
<dbReference type="GO" id="GO:0043043">
    <property type="term" value="P:peptide biosynthetic process"/>
    <property type="evidence" value="ECO:0007669"/>
    <property type="project" value="InterPro"/>
</dbReference>
<dbReference type="CDD" id="cd04470">
    <property type="entry name" value="S1_EF-P_repeat_1"/>
    <property type="match status" value="1"/>
</dbReference>
<dbReference type="CDD" id="cd05794">
    <property type="entry name" value="S1_EF-P_repeat_2"/>
    <property type="match status" value="1"/>
</dbReference>
<dbReference type="FunFam" id="2.30.30.30:FF:000003">
    <property type="entry name" value="Elongation factor P"/>
    <property type="match status" value="1"/>
</dbReference>
<dbReference type="FunFam" id="2.40.50.140:FF:000004">
    <property type="entry name" value="Elongation factor P"/>
    <property type="match status" value="1"/>
</dbReference>
<dbReference type="FunFam" id="2.40.50.140:FF:000009">
    <property type="entry name" value="Elongation factor P"/>
    <property type="match status" value="1"/>
</dbReference>
<dbReference type="Gene3D" id="2.30.30.30">
    <property type="match status" value="1"/>
</dbReference>
<dbReference type="Gene3D" id="2.40.50.140">
    <property type="entry name" value="Nucleic acid-binding proteins"/>
    <property type="match status" value="2"/>
</dbReference>
<dbReference type="HAMAP" id="MF_00141">
    <property type="entry name" value="EF_P"/>
    <property type="match status" value="1"/>
</dbReference>
<dbReference type="InterPro" id="IPR015365">
    <property type="entry name" value="Elong-fact-P_C"/>
</dbReference>
<dbReference type="InterPro" id="IPR012340">
    <property type="entry name" value="NA-bd_OB-fold"/>
</dbReference>
<dbReference type="InterPro" id="IPR014722">
    <property type="entry name" value="Rib_uL2_dom2"/>
</dbReference>
<dbReference type="InterPro" id="IPR020599">
    <property type="entry name" value="Transl_elong_fac_P/YeiP"/>
</dbReference>
<dbReference type="InterPro" id="IPR013185">
    <property type="entry name" value="Transl_elong_KOW-like"/>
</dbReference>
<dbReference type="InterPro" id="IPR001059">
    <property type="entry name" value="Transl_elong_P/YeiP_cen"/>
</dbReference>
<dbReference type="InterPro" id="IPR013852">
    <property type="entry name" value="Transl_elong_P/YeiP_CS"/>
</dbReference>
<dbReference type="InterPro" id="IPR011768">
    <property type="entry name" value="Transl_elongation_fac_P"/>
</dbReference>
<dbReference type="InterPro" id="IPR008991">
    <property type="entry name" value="Translation_prot_SH3-like_sf"/>
</dbReference>
<dbReference type="NCBIfam" id="TIGR00038">
    <property type="entry name" value="efp"/>
    <property type="match status" value="1"/>
</dbReference>
<dbReference type="NCBIfam" id="NF001810">
    <property type="entry name" value="PRK00529.1"/>
    <property type="match status" value="1"/>
</dbReference>
<dbReference type="PANTHER" id="PTHR30053">
    <property type="entry name" value="ELONGATION FACTOR P"/>
    <property type="match status" value="1"/>
</dbReference>
<dbReference type="PANTHER" id="PTHR30053:SF12">
    <property type="entry name" value="ELONGATION FACTOR P (EF-P) FAMILY PROTEIN"/>
    <property type="match status" value="1"/>
</dbReference>
<dbReference type="Pfam" id="PF01132">
    <property type="entry name" value="EFP"/>
    <property type="match status" value="1"/>
</dbReference>
<dbReference type="Pfam" id="PF08207">
    <property type="entry name" value="EFP_N"/>
    <property type="match status" value="1"/>
</dbReference>
<dbReference type="Pfam" id="PF09285">
    <property type="entry name" value="Elong-fact-P_C"/>
    <property type="match status" value="1"/>
</dbReference>
<dbReference type="PIRSF" id="PIRSF005901">
    <property type="entry name" value="EF-P"/>
    <property type="match status" value="1"/>
</dbReference>
<dbReference type="SMART" id="SM01185">
    <property type="entry name" value="EFP"/>
    <property type="match status" value="1"/>
</dbReference>
<dbReference type="SMART" id="SM00841">
    <property type="entry name" value="Elong-fact-P_C"/>
    <property type="match status" value="1"/>
</dbReference>
<dbReference type="SUPFAM" id="SSF50249">
    <property type="entry name" value="Nucleic acid-binding proteins"/>
    <property type="match status" value="2"/>
</dbReference>
<dbReference type="SUPFAM" id="SSF50104">
    <property type="entry name" value="Translation proteins SH3-like domain"/>
    <property type="match status" value="1"/>
</dbReference>
<dbReference type="PROSITE" id="PS01275">
    <property type="entry name" value="EFP"/>
    <property type="match status" value="1"/>
</dbReference>